<comment type="function">
    <text evidence="3 5">Involved in the biosynthesis of vindoline, a precursor of vinblastine and vincristine.</text>
</comment>
<comment type="catalytic activity">
    <reaction evidence="3 5">
        <text>4-O-deacetylvindoline + acetyl-CoA = vindoline + CoA</text>
        <dbReference type="Rhea" id="RHEA:24496"/>
        <dbReference type="ChEBI" id="CHEBI:57287"/>
        <dbReference type="ChEBI" id="CHEBI:57288"/>
        <dbReference type="ChEBI" id="CHEBI:57753"/>
        <dbReference type="ChEBI" id="CHEBI:58461"/>
        <dbReference type="EC" id="2.3.1.107"/>
    </reaction>
</comment>
<comment type="biophysicochemical properties">
    <kinetics>
        <KM evidence="3">9.5 uM for acetyl-CoA (at pH 7.6 and 37 degrees Celsius)</KM>
        <KM evidence="3">30 uM for deactylvindoline (at pH 7.6 and 37 degrees Celsius)</KM>
        <KM evidence="5">6.5 mM for acetyl-CoA</KM>
        <KM evidence="5">1.3 mM for deacetylvindoline</KM>
        <Vmax evidence="3">1.9 pmol/sec/mg enzyme toward acetyl-CoA (at pH 7.6 and 37 degrees Celsius)</Vmax>
        <Vmax evidence="3">3.81 pmol/sec/mg enzyme toward deactylvindoline (at pH 7.6 and 37 degrees Celsius)</Vmax>
        <Vmax evidence="5">12.6 pmol/sec/ug enzyme toward acetyl-CoA</Vmax>
        <Vmax evidence="5">10.1 pmol/sec/ug enzyme toward deacetylvindoline</Vmax>
    </kinetics>
    <phDependence>
        <text evidence="5">Optimum pH is 7.5-9.0.</text>
    </phDependence>
</comment>
<comment type="pathway">
    <text evidence="3 5">Alkaloid biosynthesis; vindoline biosynthesis.</text>
</comment>
<comment type="subunit">
    <text evidence="4">Monomer.</text>
</comment>
<comment type="subcellular location">
    <subcellularLocation>
        <location evidence="4">Cytoplasm</location>
    </subcellularLocation>
    <subcellularLocation>
        <location evidence="4">Nucleus</location>
    </subcellularLocation>
</comment>
<comment type="tissue specificity">
    <text evidence="2 3 4 6">Predominantly expressed in young leaves of mature plants. Low expression in stems and flowers and not detected in roots. Confined to the laticifer and idioblast cells of leaves, stems, and flower buds (PubMed:11154328).</text>
</comment>
<comment type="induction">
    <text evidence="6">Inhibited by tabersonine, coenzyme A, K(+), Mg(2+) and Mn(2+). Induced by light with a maximum 48 hours after initiation of the light treatment.</text>
</comment>
<comment type="similarity">
    <text evidence="10">Belongs to the plant acyltransferase family.</text>
</comment>
<comment type="caution">
    <text evidence="11">Was originally purified as a heterodimer of the N- and C-terminal end of the DAT gene product, but the cleavage of DAT protein appears to be a purification artifact.</text>
</comment>
<proteinExistence type="evidence at protein level"/>
<sequence>MESGKISVETETLSKTLIKPSSPTPQSLSRYNLSYNDQNIYQTCVSVGFFYENPDGIEISTIREQLQNSLSKTLVSYYPFAGKVVKNDYIHCNDDGIEFVEVRIRCRMNDILKYELRSYARDLVLPKRVTVGSEDTTAIVQLSHFDCGGLAVAFGISHKVADGGTIASFMKDWAASACYLSSSHHVPTPLLVSDSIFPRQDNIICEQFPTSKNCVEKTFIFPPEAIEKLKSKAVEFGIEKPTRVEVLTAFLSRCATVAGKSAAKNNNCGQSLPFPVLQAINLRPILELPQNSVGNLVSIYFSRTIKENDYLNEKEYTKLVINELRKEKQKIKNLSREKLTYVAQMEEFVKSLKEFDISNFLDIDAYLSDSWCRFPFYDVDFGWGKPIWVCLFQPYIKNCVVMMDYPFGDDYGIEAIVSFEQEKMSAFEKNEQLLQFVSN</sequence>
<keyword id="KW-0012">Acyltransferase</keyword>
<keyword id="KW-0017">Alkaloid metabolism</keyword>
<keyword id="KW-0175">Coiled coil</keyword>
<keyword id="KW-0963">Cytoplasm</keyword>
<keyword id="KW-0903">Direct protein sequencing</keyword>
<keyword id="KW-0539">Nucleus</keyword>
<keyword id="KW-0808">Transferase</keyword>
<feature type="chain" id="PRO_0000310727" description="Deacetylvindoline O-acetyltransferase">
    <location>
        <begin position="1"/>
        <end position="439"/>
    </location>
</feature>
<feature type="coiled-coil region" evidence="1">
    <location>
        <begin position="317"/>
        <end position="344"/>
    </location>
</feature>
<feature type="active site" description="Proton acceptor" evidence="1">
    <location>
        <position position="158"/>
    </location>
</feature>
<feature type="active site" description="Proton acceptor" evidence="1">
    <location>
        <position position="380"/>
    </location>
</feature>
<dbReference type="EC" id="2.3.1.107" evidence="3 5"/>
<dbReference type="EMBL" id="AF053307">
    <property type="protein sequence ID" value="AAC99311.1"/>
    <property type="molecule type" value="Genomic_DNA"/>
</dbReference>
<dbReference type="SMR" id="Q9ZTK5"/>
<dbReference type="KEGG" id="ag:AAC99311"/>
<dbReference type="BRENDA" id="2.3.1.107">
    <property type="organism ID" value="1211"/>
</dbReference>
<dbReference type="SABIO-RK" id="Q9ZTK5"/>
<dbReference type="UniPathway" id="UPA00365"/>
<dbReference type="GO" id="GO:0005737">
    <property type="term" value="C:cytoplasm"/>
    <property type="evidence" value="ECO:0007669"/>
    <property type="project" value="UniProtKB-SubCell"/>
</dbReference>
<dbReference type="GO" id="GO:0005634">
    <property type="term" value="C:nucleus"/>
    <property type="evidence" value="ECO:0007669"/>
    <property type="project" value="UniProtKB-SubCell"/>
</dbReference>
<dbReference type="GO" id="GO:0047162">
    <property type="term" value="F:17-O-deacetylvindoline O-acetyltransferase activity"/>
    <property type="evidence" value="ECO:0007669"/>
    <property type="project" value="UniProtKB-EC"/>
</dbReference>
<dbReference type="GO" id="GO:0009820">
    <property type="term" value="P:alkaloid metabolic process"/>
    <property type="evidence" value="ECO:0007669"/>
    <property type="project" value="UniProtKB-KW"/>
</dbReference>
<dbReference type="Gene3D" id="3.30.559.10">
    <property type="entry name" value="Chloramphenicol acetyltransferase-like domain"/>
    <property type="match status" value="2"/>
</dbReference>
<dbReference type="InterPro" id="IPR023213">
    <property type="entry name" value="CAT-like_dom_sf"/>
</dbReference>
<dbReference type="PANTHER" id="PTHR31623:SF88">
    <property type="entry name" value="ACYLSUGAR ACYLTRANSFERASE 3-LIKE"/>
    <property type="match status" value="1"/>
</dbReference>
<dbReference type="PANTHER" id="PTHR31623">
    <property type="entry name" value="F21J9.9"/>
    <property type="match status" value="1"/>
</dbReference>
<dbReference type="Pfam" id="PF02458">
    <property type="entry name" value="Transferase"/>
    <property type="match status" value="1"/>
</dbReference>
<protein>
    <recommendedName>
        <fullName evidence="7 8 9">Deacetylvindoline O-acetyltransferase</fullName>
        <ecNumber evidence="3 5">2.3.1.107</ecNumber>
    </recommendedName>
    <alternativeName>
        <fullName evidence="8">Acetyl-coenzyme A:deacetylvindoline 4-O-acetyltransferase</fullName>
    </alternativeName>
</protein>
<reference key="1">
    <citation type="journal article" date="1998" name="Plant J.">
        <title>The terminal O-acetyltransferase involved in vindoline biosynthesis defines a new class of proteins responsible for coenzyme A-dependent acyl transfer.</title>
        <authorList>
            <person name="St Pierre B."/>
            <person name="Laflamme P."/>
            <person name="Alarco A.-M."/>
            <person name="De Luca V."/>
        </authorList>
    </citation>
    <scope>NUCLEOTIDE SEQUENCE [GENOMIC DNA]</scope>
    <scope>PROTEIN SEQUENCE OF 6-30; 73-83; 201-216; 232-250; 334-349; 353-373 AND 424-439</scope>
    <scope>INDUCTION</scope>
    <scope>TISSUE SPECIFICITY</scope>
</reference>
<reference key="2">
    <citation type="journal article" date="1990" name="Arch. Biochem. Biophys.">
        <title>Purification and characterization of acetylcoenzyme A: deacetylvindoline 4-O-acetyltransferase from Catharanthus roseus.</title>
        <authorList>
            <person name="Power R."/>
            <person name="Kurz W.G.W."/>
            <person name="De Luca V."/>
        </authorList>
    </citation>
    <scope>FUNCTION</scope>
    <scope>CATALYTIC ACTIVITY</scope>
    <scope>BIOPHYSICOCHEMICAL PROPERTIES</scope>
    <scope>INHIBITION</scope>
    <scope>PATHWAY</scope>
</reference>
<reference key="3">
    <citation type="journal article" date="1999" name="Plant Cell">
        <title>Multicellular compartmentation of Catharanthus roseus alkaloid biosynthesis predicts intercellular translocation of a pathway intermediate.</title>
        <authorList>
            <person name="St Pierre B."/>
            <person name="Vazquez-Flota F.A."/>
            <person name="De Luca V."/>
        </authorList>
    </citation>
    <scope>TISSUE SPECIFICITY</scope>
</reference>
<reference key="4">
    <citation type="journal article" date="2001" name="Plant Physiol.">
        <title>Molecular and biochemical analysis of a Madagascar periwinkle root-specific minovincinine-19-hydroxy-O-acetyltransferase.</title>
        <authorList>
            <person name="Laflamme P."/>
            <person name="St-Pierre B."/>
            <person name="De Luca V."/>
        </authorList>
    </citation>
    <scope>FUNCTION</scope>
    <scope>CATALYTIC ACTIVITY</scope>
    <scope>TISSUE SPECIFICITY</scope>
    <scope>BIOPHYSICOCHEMICAL PROPERTIES</scope>
    <scope>PATHWAY</scope>
</reference>
<reference key="5">
    <citation type="journal article" date="2011" name="J. Plant Physiol.">
        <title>Spatial organization of the vindoline biosynthetic pathway in Catharanthus roseus.</title>
        <authorList>
            <person name="Guirimand G."/>
            <person name="Guihur A."/>
            <person name="Poutrain P."/>
            <person name="Hericourt F."/>
            <person name="Mahroug S."/>
            <person name="St-Pierre B."/>
            <person name="Burlat V."/>
            <person name="Courdavault V."/>
        </authorList>
    </citation>
    <scope>TISSUE SPECIFICITY</scope>
    <scope>SUBCELLULAR LOCATION</scope>
    <scope>SUBUNIT</scope>
</reference>
<accession>Q9ZTK5</accession>
<gene>
    <name evidence="7 8 9" type="primary">DAT</name>
</gene>
<evidence type="ECO:0000255" key="1"/>
<evidence type="ECO:0000269" key="2">
    <source>
    </source>
</evidence>
<evidence type="ECO:0000269" key="3">
    <source>
    </source>
</evidence>
<evidence type="ECO:0000269" key="4">
    <source>
    </source>
</evidence>
<evidence type="ECO:0000269" key="5">
    <source>
    </source>
</evidence>
<evidence type="ECO:0000269" key="6">
    <source>
    </source>
</evidence>
<evidence type="ECO:0000303" key="7">
    <source>
    </source>
</evidence>
<evidence type="ECO:0000303" key="8">
    <source>
    </source>
</evidence>
<evidence type="ECO:0000303" key="9">
    <source>
    </source>
</evidence>
<evidence type="ECO:0000305" key="10"/>
<evidence type="ECO:0000305" key="11">
    <source>
    </source>
</evidence>
<organism>
    <name type="scientific">Catharanthus roseus</name>
    <name type="common">Madagascar periwinkle</name>
    <name type="synonym">Vinca rosea</name>
    <dbReference type="NCBI Taxonomy" id="4058"/>
    <lineage>
        <taxon>Eukaryota</taxon>
        <taxon>Viridiplantae</taxon>
        <taxon>Streptophyta</taxon>
        <taxon>Embryophyta</taxon>
        <taxon>Tracheophyta</taxon>
        <taxon>Spermatophyta</taxon>
        <taxon>Magnoliopsida</taxon>
        <taxon>eudicotyledons</taxon>
        <taxon>Gunneridae</taxon>
        <taxon>Pentapetalae</taxon>
        <taxon>asterids</taxon>
        <taxon>lamiids</taxon>
        <taxon>Gentianales</taxon>
        <taxon>Apocynaceae</taxon>
        <taxon>Rauvolfioideae</taxon>
        <taxon>Vinceae</taxon>
        <taxon>Catharanthinae</taxon>
        <taxon>Catharanthus</taxon>
    </lineage>
</organism>
<name>DAT_CATRO</name>